<organism>
    <name type="scientific">Drosophila grimshawi</name>
    <name type="common">Hawaiian fruit fly</name>
    <name type="synonym">Idiomyia grimshawi</name>
    <dbReference type="NCBI Taxonomy" id="7222"/>
    <lineage>
        <taxon>Eukaryota</taxon>
        <taxon>Metazoa</taxon>
        <taxon>Ecdysozoa</taxon>
        <taxon>Arthropoda</taxon>
        <taxon>Hexapoda</taxon>
        <taxon>Insecta</taxon>
        <taxon>Pterygota</taxon>
        <taxon>Neoptera</taxon>
        <taxon>Endopterygota</taxon>
        <taxon>Diptera</taxon>
        <taxon>Brachycera</taxon>
        <taxon>Muscomorpha</taxon>
        <taxon>Ephydroidea</taxon>
        <taxon>Drosophilidae</taxon>
        <taxon>Drosophila</taxon>
        <taxon>Hawaiian Drosophila</taxon>
    </lineage>
</organism>
<comment type="function">
    <text evidence="2">RNA-binding component of the eukaryotic translation initiation factor 3 (eIF-3) complex, which is involved in protein synthesis of a specialized repertoire of mRNAs and, together with other initiation factors, stimulates binding of mRNA and methionyl-tRNAi to the 40S ribosome. The eIF-3 complex specifically targets and initiates translation of a subset of mRNAs involved in cell proliferation.</text>
</comment>
<comment type="subunit">
    <text evidence="1 2">Component of the eukaryotic translation initiation factor 3 (eIF-3) complex. The eIF-3 complex interacts with pix. Interacts with mxt (By similarity).</text>
</comment>
<comment type="subcellular location">
    <subcellularLocation>
        <location evidence="2">Cytoplasm</location>
    </subcellularLocation>
</comment>
<comment type="similarity">
    <text evidence="2">Belongs to the eIF-3 subunit B family.</text>
</comment>
<sequence>MAKKKSEDHSGADANDSDYNEEPNFDDPPNFVDNISDEDLLGDMLAQRPSEADGVESVVVVDNMPKVEPSRLDKLKSVINKLFSHCGEIVNVVYPVDEEGNTKGYAFMEYKTASQAEDAVKKLNNHRLDKNYTFAVNLFTDFQKYENIPEKWEPPTVQPFKVQSDLYNFINDPDTYDQYCVAAETAPNCVQVGFWQNTLPEPNELETRERFTDTFVKWSPLGTYVVTFHKPGVAIWGGSSFQKIQKFPHPGTQFVEFSPCENYLVTYGPTPTGQKIIIWDIRTGGEKRSFVGDGMSVLSMFRWSHDDKYVARMGESSIHIYETPSFYLLDLKSIKIPGIRGFSWSPTDNVIAYWVEEQNQIPARVTLMKIPKKREIRNKNLFHVADCKLHWQKSGDYLCVKVDRYSKLKKDKKELDVKFLGMFYNFEIFHMREKEIPVDSIEIRELILAFAWEPIGNKFSIIHGEQNSANVSFYEVNKGVKPSLVKRLEKKSCTHLFWSPRGQFIVMANLTMGTFEFVDTTNDYIISASPDHFRASEVEWDPTGRYVVTGVSSWKVKEDTGFNMYTLQGRIIKRTILKNFVQFLWRPRPPTLLSEEKQKEIKKNLKKYYPTFEQKDRLRLTRASKELLEKRAQLRETFMEYRNKRIAEWKDQKSRRQMLRGHVDTDNLETDEVDEEVVEFLVKEEITLLE</sequence>
<reference key="1">
    <citation type="journal article" date="2007" name="Nature">
        <title>Evolution of genes and genomes on the Drosophila phylogeny.</title>
        <authorList>
            <consortium name="Drosophila 12 genomes consortium"/>
        </authorList>
    </citation>
    <scope>NUCLEOTIDE SEQUENCE [LARGE SCALE GENOMIC DNA]</scope>
    <source>
        <strain>Tucson 15287-2541.00</strain>
    </source>
</reference>
<dbReference type="EMBL" id="CH916367">
    <property type="protein sequence ID" value="EDW00908.1"/>
    <property type="molecule type" value="Genomic_DNA"/>
</dbReference>
<dbReference type="SMR" id="B4J6D5"/>
<dbReference type="FunCoup" id="B4J6D5">
    <property type="interactions" value="2645"/>
</dbReference>
<dbReference type="STRING" id="7222.B4J6D5"/>
<dbReference type="EnsemblMetazoa" id="FBtr0156169">
    <property type="protein sequence ID" value="FBpp0154661"/>
    <property type="gene ID" value="FBgn0128218"/>
</dbReference>
<dbReference type="EnsemblMetazoa" id="XM_001986005.3">
    <property type="protein sequence ID" value="XP_001986041.1"/>
    <property type="gene ID" value="LOC6559447"/>
</dbReference>
<dbReference type="GeneID" id="6559447"/>
<dbReference type="KEGG" id="dgr:6559447"/>
<dbReference type="CTD" id="8662"/>
<dbReference type="eggNOG" id="KOG2314">
    <property type="taxonomic scope" value="Eukaryota"/>
</dbReference>
<dbReference type="HOGENOM" id="CLU_011152_1_0_1"/>
<dbReference type="InParanoid" id="B4J6D5"/>
<dbReference type="OMA" id="LWGGPQF"/>
<dbReference type="OrthoDB" id="10250414at2759"/>
<dbReference type="PhylomeDB" id="B4J6D5"/>
<dbReference type="Proteomes" id="UP000001070">
    <property type="component" value="Unassembled WGS sequence"/>
</dbReference>
<dbReference type="GO" id="GO:0016282">
    <property type="term" value="C:eukaryotic 43S preinitiation complex"/>
    <property type="evidence" value="ECO:0007669"/>
    <property type="project" value="UniProtKB-UniRule"/>
</dbReference>
<dbReference type="GO" id="GO:0033290">
    <property type="term" value="C:eukaryotic 48S preinitiation complex"/>
    <property type="evidence" value="ECO:0007669"/>
    <property type="project" value="UniProtKB-UniRule"/>
</dbReference>
<dbReference type="GO" id="GO:0005852">
    <property type="term" value="C:eukaryotic translation initiation factor 3 complex"/>
    <property type="evidence" value="ECO:0000250"/>
    <property type="project" value="UniProtKB"/>
</dbReference>
<dbReference type="GO" id="GO:0003723">
    <property type="term" value="F:RNA binding"/>
    <property type="evidence" value="ECO:0007669"/>
    <property type="project" value="UniProtKB-UniRule"/>
</dbReference>
<dbReference type="GO" id="GO:0003743">
    <property type="term" value="F:translation initiation factor activity"/>
    <property type="evidence" value="ECO:0000250"/>
    <property type="project" value="UniProtKB"/>
</dbReference>
<dbReference type="GO" id="GO:0031369">
    <property type="term" value="F:translation initiation factor binding"/>
    <property type="evidence" value="ECO:0007669"/>
    <property type="project" value="InterPro"/>
</dbReference>
<dbReference type="GO" id="GO:0030707">
    <property type="term" value="P:follicle cell of egg chamber development"/>
    <property type="evidence" value="ECO:0007669"/>
    <property type="project" value="EnsemblMetazoa"/>
</dbReference>
<dbReference type="GO" id="GO:0001732">
    <property type="term" value="P:formation of cytoplasmic translation initiation complex"/>
    <property type="evidence" value="ECO:0007669"/>
    <property type="project" value="UniProtKB-UniRule"/>
</dbReference>
<dbReference type="GO" id="GO:0006446">
    <property type="term" value="P:regulation of translational initiation"/>
    <property type="evidence" value="ECO:0000250"/>
    <property type="project" value="UniProtKB"/>
</dbReference>
<dbReference type="CDD" id="cd12278">
    <property type="entry name" value="RRM_eIF3B"/>
    <property type="match status" value="1"/>
</dbReference>
<dbReference type="FunFam" id="2.130.10.10:FF:001060">
    <property type="entry name" value="Eukaryotic translation initiation factor 3 subunit B"/>
    <property type="match status" value="1"/>
</dbReference>
<dbReference type="FunFam" id="3.30.70.330:FF:000607">
    <property type="entry name" value="Eukaryotic translation initiation factor 3 subunit B"/>
    <property type="match status" value="1"/>
</dbReference>
<dbReference type="Gene3D" id="3.30.70.330">
    <property type="match status" value="1"/>
</dbReference>
<dbReference type="Gene3D" id="2.130.10.10">
    <property type="entry name" value="YVTN repeat-like/Quinoprotein amine dehydrogenase"/>
    <property type="match status" value="1"/>
</dbReference>
<dbReference type="HAMAP" id="MF_03001">
    <property type="entry name" value="eIF3b"/>
    <property type="match status" value="1"/>
</dbReference>
<dbReference type="InterPro" id="IPR011400">
    <property type="entry name" value="EIF3B"/>
</dbReference>
<dbReference type="InterPro" id="IPR034363">
    <property type="entry name" value="eIF3B_RRM"/>
</dbReference>
<dbReference type="InterPro" id="IPR012677">
    <property type="entry name" value="Nucleotide-bd_a/b_plait_sf"/>
</dbReference>
<dbReference type="InterPro" id="IPR035979">
    <property type="entry name" value="RBD_domain_sf"/>
</dbReference>
<dbReference type="InterPro" id="IPR000504">
    <property type="entry name" value="RRM_dom"/>
</dbReference>
<dbReference type="InterPro" id="IPR013979">
    <property type="entry name" value="TIF_beta_prop-like"/>
</dbReference>
<dbReference type="InterPro" id="IPR015943">
    <property type="entry name" value="WD40/YVTN_repeat-like_dom_sf"/>
</dbReference>
<dbReference type="PANTHER" id="PTHR14068">
    <property type="entry name" value="EUKARYOTIC TRANSLATION INITIATION FACTOR 3 EIF3 -RELATED"/>
    <property type="match status" value="1"/>
</dbReference>
<dbReference type="PANTHER" id="PTHR14068:SF0">
    <property type="entry name" value="EUKARYOTIC TRANSLATION INITIATION FACTOR 3 SUBUNIT B"/>
    <property type="match status" value="1"/>
</dbReference>
<dbReference type="Pfam" id="PF08662">
    <property type="entry name" value="eIF2A"/>
    <property type="match status" value="1"/>
</dbReference>
<dbReference type="Pfam" id="PF00076">
    <property type="entry name" value="RRM_1"/>
    <property type="match status" value="1"/>
</dbReference>
<dbReference type="PIRSF" id="PIRSF036424">
    <property type="entry name" value="eIF3b"/>
    <property type="match status" value="1"/>
</dbReference>
<dbReference type="SMART" id="SM00360">
    <property type="entry name" value="RRM"/>
    <property type="match status" value="1"/>
</dbReference>
<dbReference type="SUPFAM" id="SSF54928">
    <property type="entry name" value="RNA-binding domain, RBD"/>
    <property type="match status" value="1"/>
</dbReference>
<dbReference type="SUPFAM" id="SSF69322">
    <property type="entry name" value="Tricorn protease domain 2"/>
    <property type="match status" value="1"/>
</dbReference>
<dbReference type="PROSITE" id="PS50102">
    <property type="entry name" value="RRM"/>
    <property type="match status" value="1"/>
</dbReference>
<keyword id="KW-0175">Coiled coil</keyword>
<keyword id="KW-0963">Cytoplasm</keyword>
<keyword id="KW-0396">Initiation factor</keyword>
<keyword id="KW-0648">Protein biosynthesis</keyword>
<keyword id="KW-1185">Reference proteome</keyword>
<keyword id="KW-0677">Repeat</keyword>
<keyword id="KW-0694">RNA-binding</keyword>
<keyword id="KW-0853">WD repeat</keyword>
<gene>
    <name evidence="2" type="primary">eIF3b</name>
    <name evidence="2" type="synonym">eIF3-S9</name>
    <name type="ORF">GH20755</name>
</gene>
<accession>B4J6D5</accession>
<name>EIF3B_DROGR</name>
<evidence type="ECO:0000250" key="1">
    <source>
        <dbReference type="UniProtKB" id="Q0E940"/>
    </source>
</evidence>
<evidence type="ECO:0000255" key="2">
    <source>
        <dbReference type="HAMAP-Rule" id="MF_03001"/>
    </source>
</evidence>
<evidence type="ECO:0000256" key="3">
    <source>
        <dbReference type="SAM" id="MobiDB-lite"/>
    </source>
</evidence>
<proteinExistence type="inferred from homology"/>
<protein>
    <recommendedName>
        <fullName evidence="2">Eukaryotic translation initiation factor 3 subunit B</fullName>
        <shortName evidence="2">eIF3b</shortName>
    </recommendedName>
    <alternativeName>
        <fullName evidence="2">Eukaryotic translation initiation factor 3 subunit 9</fullName>
    </alternativeName>
</protein>
<feature type="chain" id="PRO_0000363796" description="Eukaryotic translation initiation factor 3 subunit B">
    <location>
        <begin position="1"/>
        <end position="690"/>
    </location>
</feature>
<feature type="domain" description="RRM" evidence="2">
    <location>
        <begin position="57"/>
        <end position="141"/>
    </location>
</feature>
<feature type="repeat" description="WD 1">
    <location>
        <begin position="207"/>
        <end position="246"/>
    </location>
</feature>
<feature type="repeat" description="WD 2">
    <location>
        <begin position="292"/>
        <end position="331"/>
    </location>
</feature>
<feature type="repeat" description="WD 3">
    <location>
        <begin position="334"/>
        <end position="369"/>
    </location>
</feature>
<feature type="repeat" description="WD 4">
    <location>
        <begin position="442"/>
        <end position="484"/>
    </location>
</feature>
<feature type="repeat" description="WD 5">
    <location>
        <begin position="530"/>
        <end position="575"/>
    </location>
</feature>
<feature type="region of interest" description="Disordered" evidence="3">
    <location>
        <begin position="1"/>
        <end position="33"/>
    </location>
</feature>
<feature type="coiled-coil region" evidence="2">
    <location>
        <begin position="613"/>
        <end position="646"/>
    </location>
</feature>
<feature type="compositionally biased region" description="Basic and acidic residues" evidence="3">
    <location>
        <begin position="1"/>
        <end position="11"/>
    </location>
</feature>
<feature type="compositionally biased region" description="Acidic residues" evidence="3">
    <location>
        <begin position="15"/>
        <end position="25"/>
    </location>
</feature>